<keyword id="KW-0443">Lipid metabolism</keyword>
<keyword id="KW-0472">Membrane</keyword>
<keyword id="KW-1185">Reference proteome</keyword>
<keyword id="KW-0746">Sphingolipid metabolism</keyword>
<keyword id="KW-0808">Transferase</keyword>
<keyword id="KW-0812">Transmembrane</keyword>
<keyword id="KW-1133">Transmembrane helix</keyword>
<accession>Q965Q4</accession>
<protein>
    <recommendedName>
        <fullName>Putative phosphatidylcholine:ceramide cholinephosphotransferase 3</fullName>
        <ecNumber>2.7.8.27</ecNumber>
    </recommendedName>
    <alternativeName>
        <fullName>Sphingomyelin synthase 3</fullName>
    </alternativeName>
</protein>
<reference key="1">
    <citation type="journal article" date="1998" name="Science">
        <title>Genome sequence of the nematode C. elegans: a platform for investigating biology.</title>
        <authorList>
            <consortium name="The C. elegans sequencing consortium"/>
        </authorList>
    </citation>
    <scope>NUCLEOTIDE SEQUENCE [LARGE SCALE GENOMIC DNA]</scope>
    <source>
        <strain>Bristol N2</strain>
    </source>
</reference>
<reference key="2">
    <citation type="journal article" date="2004" name="EMBO J.">
        <title>Identification of a family of animal sphingomyelin synthases.</title>
        <authorList>
            <person name="Huitema K."/>
            <person name="Van Den Dikkenberg J."/>
            <person name="Brouwers J.F.H.M."/>
            <person name="Holthuis J.C."/>
        </authorList>
    </citation>
    <scope>IDENTIFICATION</scope>
</reference>
<reference key="3">
    <citation type="journal article" date="2017" name="Chem. Sci.">
        <title>Structure and conserved function of iso-branched sphingoid bases from the nematode Caenorhabditis elegans.</title>
        <authorList>
            <person name="Hannich J.T."/>
            <person name="Mellal D."/>
            <person name="Feng S."/>
            <person name="Zumbuehl A."/>
            <person name="Riezman H."/>
        </authorList>
    </citation>
    <scope>FUNCTION</scope>
</reference>
<dbReference type="EC" id="2.7.8.27"/>
<dbReference type="EMBL" id="FO081783">
    <property type="protein sequence ID" value="CCD73749.1"/>
    <property type="molecule type" value="Genomic_DNA"/>
</dbReference>
<dbReference type="RefSeq" id="NP_001380062.1">
    <property type="nucleotide sequence ID" value="NM_001393283.1"/>
</dbReference>
<dbReference type="RefSeq" id="NP_497425.1">
    <property type="nucleotide sequence ID" value="NM_065024.3"/>
</dbReference>
<dbReference type="SMR" id="Q965Q4"/>
<dbReference type="FunCoup" id="Q965Q4">
    <property type="interactions" value="53"/>
</dbReference>
<dbReference type="STRING" id="6239.Y22D7AL.8b.1"/>
<dbReference type="PaxDb" id="6239-Y22D7AL.8"/>
<dbReference type="PeptideAtlas" id="Q965Q4"/>
<dbReference type="EnsemblMetazoa" id="Y22D7AL.8a.1">
    <property type="protein sequence ID" value="Y22D7AL.8a.1"/>
    <property type="gene ID" value="WBGene00004894"/>
</dbReference>
<dbReference type="EnsemblMetazoa" id="Y22D7AL.8a.2">
    <property type="protein sequence ID" value="Y22D7AL.8a.2"/>
    <property type="gene ID" value="WBGene00004894"/>
</dbReference>
<dbReference type="EnsemblMetazoa" id="Y22D7AL.8a.3">
    <property type="protein sequence ID" value="Y22D7AL.8a.3"/>
    <property type="gene ID" value="WBGene00004894"/>
</dbReference>
<dbReference type="EnsemblMetazoa" id="Y22D7AL.8a.4">
    <property type="protein sequence ID" value="Y22D7AL.8a.4"/>
    <property type="gene ID" value="WBGene00004894"/>
</dbReference>
<dbReference type="EnsemblMetazoa" id="Y22D7AL.8a.5">
    <property type="protein sequence ID" value="Y22D7AL.8a.5"/>
    <property type="gene ID" value="WBGene00004894"/>
</dbReference>
<dbReference type="GeneID" id="175313"/>
<dbReference type="UCSC" id="Y22D7AL.8">
    <property type="organism name" value="c. elegans"/>
</dbReference>
<dbReference type="AGR" id="WB:WBGene00004894"/>
<dbReference type="WormBase" id="Y22D7AL.8a">
    <property type="protein sequence ID" value="CE26501"/>
    <property type="gene ID" value="WBGene00004894"/>
    <property type="gene designation" value="sms-3"/>
</dbReference>
<dbReference type="eggNOG" id="KOG3058">
    <property type="taxonomic scope" value="Eukaryota"/>
</dbReference>
<dbReference type="HOGENOM" id="CLU_027104_3_0_1"/>
<dbReference type="InParanoid" id="Q965Q4"/>
<dbReference type="OMA" id="TLYAMRS"/>
<dbReference type="PhylomeDB" id="Q965Q4"/>
<dbReference type="Reactome" id="R-CEL-1660661">
    <property type="pathway name" value="Sphingolipid de novo biosynthesis"/>
</dbReference>
<dbReference type="UniPathway" id="UPA00222"/>
<dbReference type="PRO" id="PR:Q965Q4"/>
<dbReference type="Proteomes" id="UP000001940">
    <property type="component" value="Chromosome III"/>
</dbReference>
<dbReference type="Bgee" id="WBGene00004894">
    <property type="expression patterns" value="Expressed in germ line (C elegans) and 4 other cell types or tissues"/>
</dbReference>
<dbReference type="ExpressionAtlas" id="Q965Q4">
    <property type="expression patterns" value="baseline and differential"/>
</dbReference>
<dbReference type="GO" id="GO:0005789">
    <property type="term" value="C:endoplasmic reticulum membrane"/>
    <property type="evidence" value="ECO:0000318"/>
    <property type="project" value="GO_Central"/>
</dbReference>
<dbReference type="GO" id="GO:0000139">
    <property type="term" value="C:Golgi membrane"/>
    <property type="evidence" value="ECO:0000318"/>
    <property type="project" value="GO_Central"/>
</dbReference>
<dbReference type="GO" id="GO:0016020">
    <property type="term" value="C:membrane"/>
    <property type="evidence" value="ECO:0000303"/>
    <property type="project" value="UniProtKB"/>
</dbReference>
<dbReference type="GO" id="GO:0005886">
    <property type="term" value="C:plasma membrane"/>
    <property type="evidence" value="ECO:0000318"/>
    <property type="project" value="GO_Central"/>
</dbReference>
<dbReference type="GO" id="GO:0047493">
    <property type="term" value="F:ceramide cholinephosphotransferase activity"/>
    <property type="evidence" value="ECO:0000250"/>
    <property type="project" value="UniProtKB"/>
</dbReference>
<dbReference type="GO" id="GO:0033188">
    <property type="term" value="F:sphingomyelin synthase activity"/>
    <property type="evidence" value="ECO:0000318"/>
    <property type="project" value="GO_Central"/>
</dbReference>
<dbReference type="GO" id="GO:0046513">
    <property type="term" value="P:ceramide biosynthetic process"/>
    <property type="evidence" value="ECO:0000318"/>
    <property type="project" value="GO_Central"/>
</dbReference>
<dbReference type="GO" id="GO:0006686">
    <property type="term" value="P:sphingomyelin biosynthetic process"/>
    <property type="evidence" value="ECO:0000250"/>
    <property type="project" value="UniProtKB"/>
</dbReference>
<dbReference type="InterPro" id="IPR045221">
    <property type="entry name" value="Sphingomyelin_synth-like"/>
</dbReference>
<dbReference type="InterPro" id="IPR025749">
    <property type="entry name" value="Sphingomyelin_synth-like_dom"/>
</dbReference>
<dbReference type="PANTHER" id="PTHR21290:SF34">
    <property type="entry name" value="PHOSPHATIDYLCHOLINE:CERAMIDE CHOLINEPHOSPHOTRANSFERASE 3-RELATED"/>
    <property type="match status" value="1"/>
</dbReference>
<dbReference type="PANTHER" id="PTHR21290">
    <property type="entry name" value="SPHINGOMYELIN SYNTHETASE"/>
    <property type="match status" value="1"/>
</dbReference>
<dbReference type="Pfam" id="PF14360">
    <property type="entry name" value="PAP2_C"/>
    <property type="match status" value="1"/>
</dbReference>
<comment type="function">
    <text evidence="2 5">Bidirectional lipid cholinephosphotransferase capable of converting phosphatidylcholine (PC) and ceramide to sphingomyelin (SM) and diacylglycerol (DAG) and vice versa. Direction is dependent on the relative concentrations of DAG and ceramide as phosphocholine acceptors. Directly and specifically recognizes the choline head group on the substrate. Also requires two fatty chains on the choline-P donor molecule in order to be recognized efficiently as a substrate. Does not function strictly as a SM synthase (By similarity). C.elegans contains specific sphingoid bases, which are unique or different in structure compared to the sphingoid bases found in other animals. Two examples of these distinctive compounds are: 15-methylhexadecasphinganine and 15-methylhexadecasphing-4-enine (PubMed:30155209).</text>
</comment>
<comment type="catalytic activity">
    <reaction evidence="6">
        <text>an N-acyl-sphingoid base + a 1,2-diacyl-sn-glycero-3-phosphocholine = an N-(acyl)-sphingosylphosphocholine + a 1,2-diacyl-sn-glycerol</text>
        <dbReference type="Rhea" id="RHEA:81451"/>
        <dbReference type="ChEBI" id="CHEBI:17815"/>
        <dbReference type="ChEBI" id="CHEBI:57643"/>
        <dbReference type="ChEBI" id="CHEBI:64583"/>
        <dbReference type="ChEBI" id="CHEBI:83273"/>
    </reaction>
    <physiologicalReaction direction="left-to-right" evidence="6">
        <dbReference type="Rhea" id="RHEA:81452"/>
    </physiologicalReaction>
</comment>
<comment type="catalytic activity">
    <reaction evidence="2">
        <text>an N-acylsphing-4-enine + a 1,2-diacyl-sn-glycero-3-phosphocholine = a sphingomyelin + a 1,2-diacyl-sn-glycerol</text>
        <dbReference type="Rhea" id="RHEA:18765"/>
        <dbReference type="ChEBI" id="CHEBI:17636"/>
        <dbReference type="ChEBI" id="CHEBI:17815"/>
        <dbReference type="ChEBI" id="CHEBI:52639"/>
        <dbReference type="ChEBI" id="CHEBI:57643"/>
        <dbReference type="EC" id="2.7.8.27"/>
    </reaction>
    <physiologicalReaction direction="left-to-right" evidence="6">
        <dbReference type="Rhea" id="RHEA:18766"/>
    </physiologicalReaction>
    <physiologicalReaction direction="right-to-left" evidence="6">
        <dbReference type="Rhea" id="RHEA:18767"/>
    </physiologicalReaction>
</comment>
<comment type="catalytic activity">
    <reaction evidence="6">
        <text>an N-acyl-15-methylhexadecasphing-4-enine + a 1,2-diacyl-sn-glycero-3-phosphocholine = an N-acyl-15-methylhexadecasphing-4-enine-1-phosphocholine + a 1,2-diacyl-sn-glycerol</text>
        <dbReference type="Rhea" id="RHEA:34607"/>
        <dbReference type="ChEBI" id="CHEBI:17815"/>
        <dbReference type="ChEBI" id="CHEBI:57643"/>
        <dbReference type="ChEBI" id="CHEBI:70775"/>
        <dbReference type="ChEBI" id="CHEBI:70846"/>
    </reaction>
    <physiologicalReaction direction="left-to-right" evidence="6">
        <dbReference type="Rhea" id="RHEA:34608"/>
    </physiologicalReaction>
    <physiologicalReaction direction="right-to-left" evidence="6">
        <dbReference type="Rhea" id="RHEA:34609"/>
    </physiologicalReaction>
</comment>
<comment type="pathway">
    <text>Lipid metabolism; sphingolipid metabolism.</text>
</comment>
<comment type="subcellular location">
    <subcellularLocation>
        <location evidence="6">Membrane</location>
        <topology evidence="6">Multi-pass membrane protein</topology>
    </subcellularLocation>
</comment>
<comment type="similarity">
    <text evidence="6">Belongs to the sphingomyelin synthase family.</text>
</comment>
<name>SMS3_CAEEL</name>
<sequence length="340" mass="38185">MGSVSKTVISARGASPDDEQNGTKNGISNGSEWAKCIFLFFFLFIAGMSNWAVLAYTHDYVPRESLPDIVFSLVSEQRWASSLGDFCVALCIVMLGALLVIHQHRGTILKRVVFCAGTLYAMRSVTLAATQLPSGYTDNQGRCRDQVESEAGVFFGRLFEQTIRIGFQSKDQMLCGDLLFSGHTLVMVTCSLAVAYYLPKSIKPLQWVSHVACLIGMICMTISRTHYTIDVVIAYWLSNMVFRMYHAYCEVDMCMERRKSILYSWWPCRIVDWLEQDIVPGRLENRCQLPWRRSTPRGQERGGASAESSDSSVTMCDNITTSHHQKHVSISSSSTYPLPC</sequence>
<organism>
    <name type="scientific">Caenorhabditis elegans</name>
    <dbReference type="NCBI Taxonomy" id="6239"/>
    <lineage>
        <taxon>Eukaryota</taxon>
        <taxon>Metazoa</taxon>
        <taxon>Ecdysozoa</taxon>
        <taxon>Nematoda</taxon>
        <taxon>Chromadorea</taxon>
        <taxon>Rhabditida</taxon>
        <taxon>Rhabditina</taxon>
        <taxon>Rhabditomorpha</taxon>
        <taxon>Rhabditoidea</taxon>
        <taxon>Rhabditidae</taxon>
        <taxon>Peloderinae</taxon>
        <taxon>Caenorhabditis</taxon>
    </lineage>
</organism>
<evidence type="ECO:0000250" key="1"/>
<evidence type="ECO:0000250" key="2">
    <source>
        <dbReference type="UniProtKB" id="Q20735"/>
    </source>
</evidence>
<evidence type="ECO:0000255" key="3"/>
<evidence type="ECO:0000256" key="4">
    <source>
        <dbReference type="SAM" id="MobiDB-lite"/>
    </source>
</evidence>
<evidence type="ECO:0000269" key="5">
    <source>
    </source>
</evidence>
<evidence type="ECO:0000305" key="6"/>
<feature type="chain" id="PRO_0000221076" description="Putative phosphatidylcholine:ceramide cholinephosphotransferase 3">
    <location>
        <begin position="1"/>
        <end position="340"/>
    </location>
</feature>
<feature type="transmembrane region" description="Helical" evidence="3">
    <location>
        <begin position="36"/>
        <end position="56"/>
    </location>
</feature>
<feature type="transmembrane region" description="Helical" evidence="3">
    <location>
        <begin position="81"/>
        <end position="101"/>
    </location>
</feature>
<feature type="transmembrane region" description="Helical" evidence="3">
    <location>
        <begin position="178"/>
        <end position="198"/>
    </location>
</feature>
<feature type="transmembrane region" description="Helical" evidence="3">
    <location>
        <begin position="202"/>
        <end position="222"/>
    </location>
</feature>
<feature type="topological domain" description="Cytoplasmic" evidence="3">
    <location>
        <begin position="223"/>
        <end position="340"/>
    </location>
</feature>
<feature type="region of interest" description="Disordered" evidence="4">
    <location>
        <begin position="1"/>
        <end position="25"/>
    </location>
</feature>
<feature type="region of interest" description="Disordered" evidence="4">
    <location>
        <begin position="294"/>
        <end position="313"/>
    </location>
</feature>
<feature type="active site" evidence="1">
    <location>
        <position position="183"/>
    </location>
</feature>
<feature type="active site" evidence="1">
    <location>
        <position position="226"/>
    </location>
</feature>
<feature type="active site" evidence="1">
    <location>
        <position position="230"/>
    </location>
</feature>
<gene>
    <name type="primary">sms-3</name>
    <name type="ORF">Y22D7AL.8</name>
</gene>
<proteinExistence type="inferred from homology"/>